<name>MBD3_HUMAN</name>
<comment type="function">
    <text evidence="5 8 12 13 15 16 18 20">Acts as a component of the histone deacetylase NuRD complex which participates in the remodeling of chromatin (PubMed:12124384, PubMed:16428440, PubMed:28977666). Acts as transcriptional repressor and plays a role in gene silencing (PubMed:10947852, PubMed:18644863). Does not bind to methylated DNA by itself (PubMed:12124384, PubMed:16428440). Binds to a lesser degree DNA containing unmethylated CpG dinucleotides (PubMed:24307175). Recruits histone deacetylases and DNA methyltransferases.</text>
</comment>
<comment type="subunit">
    <text evidence="1 5 6 7 8 9 10 11 12 17 19">Heterodimer (via N-terminus) with MBD2 (PubMed:10947852, PubMed:15701600). Component of the MeCP1 histone deacetylase complex (PubMed:11756549, PubMed:12124384). Component of the nucleosome remodeling and deacetylase (NuRD) repressor complex, composed of core proteins MTA1, MTA2, MTA3, RBBP4, RBBP7, HDAC1, HDAC2, MBD2, MBD3, and peripherally associated proteins CDK2AP1, CDK2AP2, GATAD2A, GATAD2B, CHD3, CHD4 and CHD5 (PubMed:12124384, PubMed:15454082, PubMed:16428440, PubMed:27732854, PubMed:28977666, PubMed:33283408). The exact stoichiometry of the NuRD complex is unknown, and some subunits such as MBD2 and MBD3, GATAD2A and GATAD2B, and CHD3, CHD4 and CHD5 define mutually exclusive NuRD complexes (PubMed:16428440, PubMed:27732854, PubMed:28977666, PubMed:33283408). Interacts with MBD3L2 (via N-terminus); the interaction is direct (PubMed:15701600). Interacts with BCL6 (PubMed:15454082). Interacts with CDK2AP1 (PubMed:20523938). Interacts with HDAC1 (PubMed:12124384). Interacts with MTA2 (PubMed:12124384). Interacts with DNMT1 (PubMed:10947852). Interacts with GATAD2A (PubMed:12183469, PubMed:27732854). Interacts with GATAD2B (PubMed:11756549, PubMed:12183469, PubMed:27732854). Does not interact with PWWP2A (By similarity). Does not interact with PWWP2B (By similarity).</text>
</comment>
<comment type="interaction">
    <interactant intactId="EBI-1783068">
        <id>O95983</id>
    </interactant>
    <interactant intactId="EBI-742887">
        <id>Q8TAP6</id>
        <label>CEP76</label>
    </interactant>
    <organismsDiffer>false</organismsDiffer>
    <experiments>3</experiments>
</comment>
<comment type="interaction">
    <interactant intactId="EBI-1783068">
        <id>O95983</id>
    </interactant>
    <interactant intactId="EBI-351962">
        <id>P17844</id>
        <label>DDX5</label>
    </interactant>
    <organismsDiffer>false</organismsDiffer>
    <experiments>4</experiments>
</comment>
<comment type="interaction">
    <interactant intactId="EBI-1783068">
        <id>O95983</id>
    </interactant>
    <interactant intactId="EBI-923440">
        <id>Q8WXI9</id>
        <label>GATAD2B</label>
    </interactant>
    <organismsDiffer>false</organismsDiffer>
    <experiments>7</experiments>
</comment>
<comment type="interaction">
    <interactant intactId="EBI-1783068">
        <id>O95983</id>
    </interactant>
    <interactant intactId="EBI-618309">
        <id>Q08379</id>
        <label>GOLGA2</label>
    </interactant>
    <organismsDiffer>false</organismsDiffer>
    <experiments>3</experiments>
</comment>
<comment type="interaction">
    <interactant intactId="EBI-1783068">
        <id>O95983</id>
    </interactant>
    <interactant intactId="EBI-301834">
        <id>Q13547</id>
        <label>HDAC1</label>
    </interactant>
    <organismsDiffer>false</organismsDiffer>
    <experiments>10</experiments>
</comment>
<comment type="interaction">
    <interactant intactId="EBI-1783068">
        <id>O95983</id>
    </interactant>
    <interactant intactId="EBI-1046751">
        <id>Q05084</id>
        <label>ICA1</label>
    </interactant>
    <organismsDiffer>false</organismsDiffer>
    <experiments>3</experiments>
</comment>
<comment type="interaction">
    <interactant intactId="EBI-1783068">
        <id>O95983</id>
    </interactant>
    <interactant intactId="EBI-710124">
        <id>O60341</id>
        <label>KDM1A</label>
    </interactant>
    <organismsDiffer>false</organismsDiffer>
    <experiments>4</experiments>
</comment>
<comment type="interaction">
    <interactant intactId="EBI-1783068">
        <id>O95983</id>
    </interactant>
    <interactant intactId="EBI-7232405">
        <id>O43474</id>
        <label>KLF4</label>
    </interactant>
    <organismsDiffer>false</organismsDiffer>
    <experiments>3</experiments>
</comment>
<comment type="interaction">
    <interactant intactId="EBI-1783068">
        <id>O95983</id>
    </interactant>
    <interactant intactId="EBI-739566">
        <id>P19012</id>
        <label>KRT15</label>
    </interactant>
    <organismsDiffer>false</organismsDiffer>
    <experiments>3</experiments>
</comment>
<comment type="interaction">
    <interactant intactId="EBI-1783068">
        <id>O95983</id>
    </interactant>
    <interactant intactId="EBI-447544">
        <id>P01106</id>
        <label>MYC</label>
    </interactant>
    <organismsDiffer>false</organismsDiffer>
    <experiments>3</experiments>
</comment>
<comment type="interaction">
    <interactant intactId="EBI-1783068">
        <id>O95983</id>
    </interactant>
    <interactant intactId="EBI-475687">
        <id>Q01860</id>
        <label>POU5F1</label>
    </interactant>
    <organismsDiffer>false</organismsDiffer>
    <experiments>3</experiments>
</comment>
<comment type="interaction">
    <interactant intactId="EBI-1783068">
        <id>O95983</id>
    </interactant>
    <interactant intactId="EBI-746283">
        <id>Q96D15</id>
        <label>RCN3</label>
    </interactant>
    <organismsDiffer>false</organismsDiffer>
    <experiments>3</experiments>
</comment>
<comment type="interaction">
    <interactant intactId="EBI-1783068">
        <id>O95983</id>
    </interactant>
    <interactant intactId="EBI-727004">
        <id>O00560</id>
        <label>SDCBP</label>
    </interactant>
    <organismsDiffer>false</organismsDiffer>
    <experiments>3</experiments>
</comment>
<comment type="interaction">
    <interactant intactId="EBI-1783068">
        <id>O95983</id>
    </interactant>
    <interactant intactId="EBI-6124081">
        <id>P48431</id>
        <label>SOX2</label>
    </interactant>
    <organismsDiffer>false</organismsDiffer>
    <experiments>3</experiments>
</comment>
<comment type="interaction">
    <interactant intactId="EBI-1783068">
        <id>O95983</id>
    </interactant>
    <interactant intactId="EBI-2130429">
        <id>Q9BYV2</id>
        <label>TRIM54</label>
    </interactant>
    <organismsDiffer>false</organismsDiffer>
    <experiments>3</experiments>
</comment>
<comment type="interaction">
    <interactant intactId="EBI-1783068">
        <id>O95983</id>
    </interactant>
    <interactant intactId="EBI-10192794">
        <id>Q8WWA6</id>
        <label>ZNF277</label>
    </interactant>
    <organismsDiffer>false</organismsDiffer>
    <experiments>3</experiments>
</comment>
<comment type="interaction">
    <interactant intactId="EBI-11978579">
        <id>O95983-2</id>
    </interactant>
    <interactant intactId="EBI-712648">
        <id>O95994</id>
        <label>AGR2</label>
    </interactant>
    <organismsDiffer>false</organismsDiffer>
    <experiments>3</experiments>
</comment>
<comment type="interaction">
    <interactant intactId="EBI-11978579">
        <id>O95983-2</id>
    </interactant>
    <interactant intactId="EBI-16746154">
        <id>Q7Z3H0-1</id>
        <label>ANKRD33</label>
    </interactant>
    <organismsDiffer>false</organismsDiffer>
    <experiments>3</experiments>
</comment>
<comment type="interaction">
    <interactant intactId="EBI-11978579">
        <id>O95983-2</id>
    </interactant>
    <interactant intactId="EBI-10254793">
        <id>Q6XD76</id>
        <label>ASCL4</label>
    </interactant>
    <organismsDiffer>false</organismsDiffer>
    <experiments>3</experiments>
</comment>
<comment type="interaction">
    <interactant intactId="EBI-11978579">
        <id>O95983-2</id>
    </interactant>
    <interactant intactId="EBI-17212717">
        <id>G5E9W6</id>
        <label>CCDC183</label>
    </interactant>
    <organismsDiffer>false</organismsDiffer>
    <experiments>3</experiments>
</comment>
<comment type="interaction">
    <interactant intactId="EBI-11978579">
        <id>O95983-2</id>
    </interactant>
    <interactant intactId="EBI-10175300">
        <id>Q8TD31-3</id>
        <label>CCHCR1</label>
    </interactant>
    <organismsDiffer>false</organismsDiffer>
    <experiments>3</experiments>
</comment>
<comment type="interaction">
    <interactant intactId="EBI-11978579">
        <id>O95983-2</id>
    </interactant>
    <interactant intactId="EBI-395261">
        <id>P24863</id>
        <label>CCNC</label>
    </interactant>
    <organismsDiffer>false</organismsDiffer>
    <experiments>3</experiments>
</comment>
<comment type="interaction">
    <interactant intactId="EBI-11978579">
        <id>O95983-2</id>
    </interactant>
    <interactant intactId="EBI-10250303">
        <id>Q6IPU0</id>
        <label>CENPP</label>
    </interactant>
    <organismsDiffer>false</organismsDiffer>
    <experiments>3</experiments>
</comment>
<comment type="interaction">
    <interactant intactId="EBI-11978579">
        <id>O95983-2</id>
    </interactant>
    <interactant intactId="EBI-739624">
        <id>Q8NHQ1</id>
        <label>CEP70</label>
    </interactant>
    <organismsDiffer>false</organismsDiffer>
    <experiments>3</experiments>
</comment>
<comment type="interaction">
    <interactant intactId="EBI-11978579">
        <id>O95983-2</id>
    </interactant>
    <interactant intactId="EBI-742887">
        <id>Q8TAP6</id>
        <label>CEP76</label>
    </interactant>
    <organismsDiffer>false</organismsDiffer>
    <experiments>3</experiments>
</comment>
<comment type="interaction">
    <interactant intactId="EBI-11978579">
        <id>O95983-2</id>
    </interactant>
    <interactant intactId="EBI-6873363">
        <id>Q8WUE5</id>
        <label>CT55</label>
    </interactant>
    <organismsDiffer>false</organismsDiffer>
    <experiments>3</experiments>
</comment>
<comment type="interaction">
    <interactant intactId="EBI-11978579">
        <id>O95983-2</id>
    </interactant>
    <interactant intactId="EBI-17869840">
        <id>Q96A65-2</id>
        <label>EXOC4</label>
    </interactant>
    <organismsDiffer>false</organismsDiffer>
    <experiments>3</experiments>
</comment>
<comment type="interaction">
    <interactant intactId="EBI-11978579">
        <id>O95983-2</id>
    </interactant>
    <interactant intactId="EBI-373319">
        <id>Q96C01</id>
        <label>FAM136A</label>
    </interactant>
    <organismsDiffer>false</organismsDiffer>
    <experiments>3</experiments>
</comment>
<comment type="interaction">
    <interactant intactId="EBI-11978579">
        <id>O95983-2</id>
    </interactant>
    <interactant intactId="EBI-372506">
        <id>Q8TAE8</id>
        <label>GADD45GIP1</label>
    </interactant>
    <organismsDiffer>false</organismsDiffer>
    <experiments>3</experiments>
</comment>
<comment type="interaction">
    <interactant intactId="EBI-11978579">
        <id>O95983-2</id>
    </interactant>
    <interactant intactId="EBI-726224">
        <id>Q86YP4</id>
        <label>GATAD2A</label>
    </interactant>
    <organismsDiffer>false</organismsDiffer>
    <experiments>3</experiments>
</comment>
<comment type="interaction">
    <interactant intactId="EBI-11978579">
        <id>O95983-2</id>
    </interactant>
    <interactant intactId="EBI-618309">
        <id>Q08379</id>
        <label>GOLGA2</label>
    </interactant>
    <organismsDiffer>false</organismsDiffer>
    <experiments>3</experiments>
</comment>
<comment type="interaction">
    <interactant intactId="EBI-11978579">
        <id>O95983-2</id>
    </interactant>
    <interactant intactId="EBI-5916454">
        <id>A6NEM1</id>
        <label>GOLGA6L9</label>
    </interactant>
    <organismsDiffer>false</organismsDiffer>
    <experiments>3</experiments>
</comment>
<comment type="interaction">
    <interactant intactId="EBI-11978579">
        <id>O95983-2</id>
    </interactant>
    <interactant intactId="EBI-947015">
        <id>P24592</id>
        <label>IGFBP6</label>
    </interactant>
    <organismsDiffer>false</organismsDiffer>
    <experiments>3</experiments>
</comment>
<comment type="interaction">
    <interactant intactId="EBI-11978579">
        <id>O95983-2</id>
    </interactant>
    <interactant intactId="EBI-713456">
        <id>Q13123</id>
        <label>IK</label>
    </interactant>
    <organismsDiffer>false</organismsDiffer>
    <experiments>3</experiments>
</comment>
<comment type="interaction">
    <interactant intactId="EBI-11978579">
        <id>O95983-2</id>
    </interactant>
    <interactant intactId="EBI-356410">
        <id>P08779</id>
        <label>KRT16</label>
    </interactant>
    <organismsDiffer>false</organismsDiffer>
    <experiments>3</experiments>
</comment>
<comment type="interaction">
    <interactant intactId="EBI-11978579">
        <id>O95983-2</id>
    </interactant>
    <interactant intactId="EBI-740738">
        <id>O95751</id>
        <label>LDOC1</label>
    </interactant>
    <organismsDiffer>false</organismsDiffer>
    <experiments>3</experiments>
</comment>
<comment type="interaction">
    <interactant intactId="EBI-11978579">
        <id>O95983-2</id>
    </interactant>
    <interactant intactId="EBI-11742507">
        <id>Q8TAP4-4</id>
        <label>LMO3</label>
    </interactant>
    <organismsDiffer>false</organismsDiffer>
    <experiments>3</experiments>
</comment>
<comment type="interaction">
    <interactant intactId="EBI-11978579">
        <id>O95983-2</id>
    </interactant>
    <interactant intactId="EBI-5650739">
        <id>P43356</id>
        <label>MAGEA2B</label>
    </interactant>
    <organismsDiffer>false</organismsDiffer>
    <experiments>3</experiments>
</comment>
<comment type="interaction">
    <interactant intactId="EBI-11978579">
        <id>O95983-2</id>
    </interactant>
    <interactant intactId="EBI-18582591">
        <id>Q99687-3</id>
        <label>MEIS3</label>
    </interactant>
    <organismsDiffer>false</organismsDiffer>
    <experiments>3</experiments>
</comment>
<comment type="interaction">
    <interactant intactId="EBI-11978579">
        <id>O95983-2</id>
    </interactant>
    <interactant intactId="EBI-2864512">
        <id>P50221</id>
        <label>MEOX1</label>
    </interactant>
    <organismsDiffer>false</organismsDiffer>
    <experiments>3</experiments>
</comment>
<comment type="interaction">
    <interactant intactId="EBI-11978579">
        <id>O95983-2</id>
    </interactant>
    <interactant intactId="EBI-16439278">
        <id>Q6FHY5</id>
        <label>MEOX2</label>
    </interactant>
    <organismsDiffer>false</organismsDiffer>
    <experiments>3</experiments>
</comment>
<comment type="interaction">
    <interactant intactId="EBI-11978579">
        <id>O95983-2</id>
    </interactant>
    <interactant intactId="EBI-2548751">
        <id>Q8TD10</id>
        <label>MIPOL1</label>
    </interactant>
    <organismsDiffer>false</organismsDiffer>
    <experiments>3</experiments>
</comment>
<comment type="interaction">
    <interactant intactId="EBI-11978579">
        <id>O95983-2</id>
    </interactant>
    <interactant intactId="EBI-2340269">
        <id>Q13064</id>
        <label>MKRN3</label>
    </interactant>
    <organismsDiffer>false</organismsDiffer>
    <experiments>3</experiments>
</comment>
<comment type="interaction">
    <interactant intactId="EBI-11978579">
        <id>O95983-2</id>
    </interactant>
    <interactant intactId="EBI-11522433">
        <id>Q5JR59-3</id>
        <label>MTUS2</label>
    </interactant>
    <organismsDiffer>false</organismsDiffer>
    <experiments>3</experiments>
</comment>
<comment type="interaction">
    <interactant intactId="EBI-11978579">
        <id>O95983-2</id>
    </interactant>
    <interactant intactId="EBI-3906629">
        <id>P15173</id>
        <label>MYOG</label>
    </interactant>
    <organismsDiffer>false</organismsDiffer>
    <experiments>3</experiments>
</comment>
<comment type="interaction">
    <interactant intactId="EBI-11978579">
        <id>O95983-2</id>
    </interactant>
    <interactant intactId="EBI-10302990">
        <id>Q9BYU1</id>
        <label>PBX4</label>
    </interactant>
    <organismsDiffer>false</organismsDiffer>
    <experiments>3</experiments>
</comment>
<comment type="interaction">
    <interactant intactId="EBI-11978579">
        <id>O95983-2</id>
    </interactant>
    <interactant intactId="EBI-11995148">
        <id>P04085-2</id>
        <label>PDGFA</label>
    </interactant>
    <organismsDiffer>false</organismsDiffer>
    <experiments>3</experiments>
</comment>
<comment type="interaction">
    <interactant intactId="EBI-11978579">
        <id>O95983-2</id>
    </interactant>
    <interactant intactId="EBI-356973">
        <id>O15212</id>
        <label>PFDN6</label>
    </interactant>
    <organismsDiffer>false</organismsDiffer>
    <experiments>3</experiments>
</comment>
<comment type="interaction">
    <interactant intactId="EBI-11978579">
        <id>O95983-2</id>
    </interactant>
    <interactant intactId="EBI-79165">
        <id>Q9NRD5</id>
        <label>PICK1</label>
    </interactant>
    <organismsDiffer>false</organismsDiffer>
    <experiments>3</experiments>
</comment>
<comment type="interaction">
    <interactant intactId="EBI-11978579">
        <id>O95983-2</id>
    </interactant>
    <interactant intactId="EBI-2692890">
        <id>Q96KN3</id>
        <label>PKNOX2</label>
    </interactant>
    <organismsDiffer>false</organismsDiffer>
    <experiments>5</experiments>
</comment>
<comment type="interaction">
    <interactant intactId="EBI-11978579">
        <id>O95983-2</id>
    </interactant>
    <interactant intactId="EBI-2805516">
        <id>P31321</id>
        <label>PRKAR1B</label>
    </interactant>
    <organismsDiffer>false</organismsDiffer>
    <experiments>3</experiments>
</comment>
<comment type="interaction">
    <interactant intactId="EBI-11978579">
        <id>O95983-2</id>
    </interactant>
    <interactant intactId="EBI-11984839">
        <id>Q96QF0-7</id>
        <label>RAB3IP</label>
    </interactant>
    <organismsDiffer>false</organismsDiffer>
    <experiments>3</experiments>
</comment>
<comment type="interaction">
    <interactant intactId="EBI-11978579">
        <id>O95983-2</id>
    </interactant>
    <interactant intactId="EBI-746283">
        <id>Q96D15</id>
        <label>RCN3</label>
    </interactant>
    <organismsDiffer>false</organismsDiffer>
    <experiments>3</experiments>
</comment>
<comment type="interaction">
    <interactant intactId="EBI-11978579">
        <id>O95983-2</id>
    </interactant>
    <interactant intactId="EBI-10829018">
        <id>Q04864-2</id>
        <label>REL</label>
    </interactant>
    <organismsDiffer>false</organismsDiffer>
    <experiments>3</experiments>
</comment>
<comment type="interaction">
    <interactant intactId="EBI-11978579">
        <id>O95983-2</id>
    </interactant>
    <interactant intactId="EBI-726876">
        <id>Q6NUQ1</id>
        <label>RINT1</label>
    </interactant>
    <organismsDiffer>false</organismsDiffer>
    <experiments>3</experiments>
</comment>
<comment type="interaction">
    <interactant intactId="EBI-11978579">
        <id>O95983-2</id>
    </interactant>
    <interactant intactId="EBI-748621">
        <id>Q9UJW9</id>
        <label>SERTAD3</label>
    </interactant>
    <organismsDiffer>false</organismsDiffer>
    <experiments>3</experiments>
</comment>
<comment type="interaction">
    <interactant intactId="EBI-11978579">
        <id>O95983-2</id>
    </interactant>
    <interactant intactId="EBI-714194">
        <id>Q93045</id>
        <label>STMN2</label>
    </interactant>
    <organismsDiffer>false</organismsDiffer>
    <experiments>3</experiments>
</comment>
<comment type="interaction">
    <interactant intactId="EBI-11978579">
        <id>O95983-2</id>
    </interactant>
    <interactant intactId="EBI-6872807">
        <id>Q8N0S2</id>
        <label>SYCE1</label>
    </interactant>
    <organismsDiffer>false</organismsDiffer>
    <experiments>3</experiments>
</comment>
<comment type="interaction">
    <interactant intactId="EBI-11978579">
        <id>O95983-2</id>
    </interactant>
    <interactant intactId="EBI-1221022">
        <id>Q8N5T2</id>
        <label>TBC1D19</label>
    </interactant>
    <organismsDiffer>false</organismsDiffer>
    <experiments>3</experiments>
</comment>
<comment type="interaction">
    <interactant intactId="EBI-11978579">
        <id>O95983-2</id>
    </interactant>
    <interactant intactId="EBI-1200382">
        <id>Q9Y5J6</id>
        <label>TIMM10B</label>
    </interactant>
    <organismsDiffer>false</organismsDiffer>
    <experiments>3</experiments>
</comment>
<comment type="interaction">
    <interactant intactId="EBI-11978579">
        <id>O95983-2</id>
    </interactant>
    <interactant intactId="EBI-746692">
        <id>P19237</id>
        <label>TNNI1</label>
    </interactant>
    <organismsDiffer>false</organismsDiffer>
    <experiments>3</experiments>
</comment>
<comment type="interaction">
    <interactant intactId="EBI-11978579">
        <id>O95983-2</id>
    </interactant>
    <interactant intactId="EBI-2130429">
        <id>Q9BYV2</id>
        <label>TRIM54</label>
    </interactant>
    <organismsDiffer>false</organismsDiffer>
    <experiments>3</experiments>
</comment>
<comment type="interaction">
    <interactant intactId="EBI-11978579">
        <id>O95983-2</id>
    </interactant>
    <interactant intactId="EBI-9090990">
        <id>Q5W5X9-3</id>
        <label>TTC23</label>
    </interactant>
    <organismsDiffer>false</organismsDiffer>
    <experiments>3</experiments>
</comment>
<comment type="interaction">
    <interactant intactId="EBI-11978579">
        <id>O95983-2</id>
    </interactant>
    <interactant intactId="EBI-625509">
        <id>Q8N720</id>
        <label>ZNF655</label>
    </interactant>
    <organismsDiffer>false</organismsDiffer>
    <experiments>3</experiments>
</comment>
<comment type="subcellular location">
    <subcellularLocation>
        <location evidence="11 12 14 18 19">Nucleus</location>
    </subcellularLocation>
    <subcellularLocation>
        <location evidence="17">Chromosome</location>
    </subcellularLocation>
    <text evidence="17">Nuclear, in discrete foci. Detected on chromatin, at promoter regions of active genes.</text>
</comment>
<comment type="alternative products">
    <event type="alternative splicing"/>
    <isoform>
        <id>O95983-1</id>
        <name>1</name>
        <sequence type="displayed"/>
    </isoform>
    <isoform>
        <id>O95983-2</id>
        <name>2</name>
        <sequence type="described" ref="VSP_011081"/>
    </isoform>
</comment>
<comment type="sequence caution" evidence="22">
    <conflict type="erroneous initiation">
        <sequence resource="EMBL-CDS" id="AAH32443"/>
    </conflict>
    <text>Extended N-terminus.</text>
</comment>
<feature type="chain" id="PRO_0000096262" description="Methyl-CpG-binding domain protein 3">
    <location>
        <begin position="1"/>
        <end position="291"/>
    </location>
</feature>
<feature type="domain" description="MBD" evidence="3">
    <location>
        <begin position="1"/>
        <end position="72"/>
    </location>
</feature>
<feature type="region of interest" description="Required for interaction with MBD2" evidence="11">
    <location>
        <begin position="1"/>
        <end position="80"/>
    </location>
</feature>
<feature type="region of interest" description="Required for interaction with MBD3L2" evidence="11">
    <location>
        <begin position="60"/>
        <end position="80"/>
    </location>
</feature>
<feature type="region of interest" description="Disordered" evidence="4">
    <location>
        <begin position="254"/>
        <end position="291"/>
    </location>
</feature>
<feature type="coiled-coil region" evidence="2">
    <location>
        <begin position="216"/>
        <end position="245"/>
    </location>
</feature>
<feature type="compositionally biased region" description="Basic and acidic residues" evidence="4">
    <location>
        <begin position="254"/>
        <end position="267"/>
    </location>
</feature>
<feature type="compositionally biased region" description="Acidic residues" evidence="4">
    <location>
        <begin position="268"/>
        <end position="291"/>
    </location>
</feature>
<feature type="modified residue" description="Phosphoserine" evidence="23 24 25 26 27">
    <location>
        <position position="56"/>
    </location>
</feature>
<feature type="modified residue" description="Phosphoserine" evidence="25 26 27">
    <location>
        <position position="85"/>
    </location>
</feature>
<feature type="modified residue" description="Phosphoserine" evidence="24 25">
    <location>
        <position position="144"/>
    </location>
</feature>
<feature type="cross-link" description="Glycyl lysine isopeptide (Lys-Gly) (interchain with G-Cter in SUMO2)" evidence="28">
    <location>
        <position position="73"/>
    </location>
</feature>
<feature type="cross-link" description="Glycyl lysine isopeptide (Lys-Gly) (interchain with G-Cter in SUMO2)" evidence="28">
    <location>
        <position position="90"/>
    </location>
</feature>
<feature type="cross-link" description="Glycyl lysine isopeptide (Lys-Gly) (interchain with G-Cter in SUMO2)" evidence="28">
    <location>
        <position position="92"/>
    </location>
</feature>
<feature type="splice variant" id="VSP_011081" description="In isoform 2." evidence="21">
    <location>
        <begin position="5"/>
        <end position="36"/>
    </location>
</feature>
<feature type="mutagenesis site" description="No effect. Confers strong binding to methylated CpG (in vitro); when associated with Y-34." evidence="8 16">
    <original>H</original>
    <variation>K</variation>
    <location>
        <position position="30"/>
    </location>
</feature>
<feature type="mutagenesis site" description="Augments DNA binding activity, irrespective of DNA methylation." evidence="8 16">
    <original>F</original>
    <variation>A</variation>
    <location>
        <position position="34"/>
    </location>
</feature>
<feature type="mutagenesis site" description="Confers weak binding to methylated CpG (in vitro). Confers strong binding to methylated CpG (in vitro); when associated with K-30." evidence="8 16">
    <original>F</original>
    <variation>Y</variation>
    <location>
        <position position="34"/>
    </location>
</feature>
<feature type="strand" evidence="29">
    <location>
        <begin position="4"/>
        <end position="7"/>
    </location>
</feature>
<feature type="strand" evidence="29">
    <location>
        <begin position="16"/>
        <end position="21"/>
    </location>
</feature>
<feature type="turn" evidence="29">
    <location>
        <begin position="26"/>
        <end position="29"/>
    </location>
</feature>
<feature type="strand" evidence="29">
    <location>
        <begin position="31"/>
        <end position="36"/>
    </location>
</feature>
<feature type="helix" evidence="29">
    <location>
        <begin position="46"/>
        <end position="53"/>
    </location>
</feature>
<feature type="turn" evidence="29">
    <location>
        <begin position="54"/>
        <end position="56"/>
    </location>
</feature>
<feature type="turn" evidence="29">
    <location>
        <begin position="64"/>
        <end position="67"/>
    </location>
</feature>
<reference key="1">
    <citation type="journal article" date="1998" name="Mol. Cell. Biol.">
        <title>Identification and characterization of a family of mammalian methyl-CpG binding proteins.</title>
        <authorList>
            <person name="Hendrich B."/>
            <person name="Bird A."/>
        </authorList>
    </citation>
    <scope>NUCLEOTIDE SEQUENCE (ISOFORM 1)</scope>
    <scope>FUNCTION</scope>
    <scope>SUBCELLULAR LOCATION</scope>
</reference>
<reference key="2">
    <citation type="journal article" date="2004" name="Nat. Genet.">
        <title>Complete sequencing and characterization of 21,243 full-length human cDNAs.</title>
        <authorList>
            <person name="Ota T."/>
            <person name="Suzuki Y."/>
            <person name="Nishikawa T."/>
            <person name="Otsuki T."/>
            <person name="Sugiyama T."/>
            <person name="Irie R."/>
            <person name="Wakamatsu A."/>
            <person name="Hayashi K."/>
            <person name="Sato H."/>
            <person name="Nagai K."/>
            <person name="Kimura K."/>
            <person name="Makita H."/>
            <person name="Sekine M."/>
            <person name="Obayashi M."/>
            <person name="Nishi T."/>
            <person name="Shibahara T."/>
            <person name="Tanaka T."/>
            <person name="Ishii S."/>
            <person name="Yamamoto J."/>
            <person name="Saito K."/>
            <person name="Kawai Y."/>
            <person name="Isono Y."/>
            <person name="Nakamura Y."/>
            <person name="Nagahari K."/>
            <person name="Murakami K."/>
            <person name="Yasuda T."/>
            <person name="Iwayanagi T."/>
            <person name="Wagatsuma M."/>
            <person name="Shiratori A."/>
            <person name="Sudo H."/>
            <person name="Hosoiri T."/>
            <person name="Kaku Y."/>
            <person name="Kodaira H."/>
            <person name="Kondo H."/>
            <person name="Sugawara M."/>
            <person name="Takahashi M."/>
            <person name="Kanda K."/>
            <person name="Yokoi T."/>
            <person name="Furuya T."/>
            <person name="Kikkawa E."/>
            <person name="Omura Y."/>
            <person name="Abe K."/>
            <person name="Kamihara K."/>
            <person name="Katsuta N."/>
            <person name="Sato K."/>
            <person name="Tanikawa M."/>
            <person name="Yamazaki M."/>
            <person name="Ninomiya K."/>
            <person name="Ishibashi T."/>
            <person name="Yamashita H."/>
            <person name="Murakawa K."/>
            <person name="Fujimori K."/>
            <person name="Tanai H."/>
            <person name="Kimata M."/>
            <person name="Watanabe M."/>
            <person name="Hiraoka S."/>
            <person name="Chiba Y."/>
            <person name="Ishida S."/>
            <person name="Ono Y."/>
            <person name="Takiguchi S."/>
            <person name="Watanabe S."/>
            <person name="Yosida M."/>
            <person name="Hotuta T."/>
            <person name="Kusano J."/>
            <person name="Kanehori K."/>
            <person name="Takahashi-Fujii A."/>
            <person name="Hara H."/>
            <person name="Tanase T.-O."/>
            <person name="Nomura Y."/>
            <person name="Togiya S."/>
            <person name="Komai F."/>
            <person name="Hara R."/>
            <person name="Takeuchi K."/>
            <person name="Arita M."/>
            <person name="Imose N."/>
            <person name="Musashino K."/>
            <person name="Yuuki H."/>
            <person name="Oshima A."/>
            <person name="Sasaki N."/>
            <person name="Aotsuka S."/>
            <person name="Yoshikawa Y."/>
            <person name="Matsunawa H."/>
            <person name="Ichihara T."/>
            <person name="Shiohata N."/>
            <person name="Sano S."/>
            <person name="Moriya S."/>
            <person name="Momiyama H."/>
            <person name="Satoh N."/>
            <person name="Takami S."/>
            <person name="Terashima Y."/>
            <person name="Suzuki O."/>
            <person name="Nakagawa S."/>
            <person name="Senoh A."/>
            <person name="Mizoguchi H."/>
            <person name="Goto Y."/>
            <person name="Shimizu F."/>
            <person name="Wakebe H."/>
            <person name="Hishigaki H."/>
            <person name="Watanabe T."/>
            <person name="Sugiyama A."/>
            <person name="Takemoto M."/>
            <person name="Kawakami B."/>
            <person name="Yamazaki M."/>
            <person name="Watanabe K."/>
            <person name="Kumagai A."/>
            <person name="Itakura S."/>
            <person name="Fukuzumi Y."/>
            <person name="Fujimori Y."/>
            <person name="Komiyama M."/>
            <person name="Tashiro H."/>
            <person name="Tanigami A."/>
            <person name="Fujiwara T."/>
            <person name="Ono T."/>
            <person name="Yamada K."/>
            <person name="Fujii Y."/>
            <person name="Ozaki K."/>
            <person name="Hirao M."/>
            <person name="Ohmori Y."/>
            <person name="Kawabata A."/>
            <person name="Hikiji T."/>
            <person name="Kobatake N."/>
            <person name="Inagaki H."/>
            <person name="Ikema Y."/>
            <person name="Okamoto S."/>
            <person name="Okitani R."/>
            <person name="Kawakami T."/>
            <person name="Noguchi S."/>
            <person name="Itoh T."/>
            <person name="Shigeta K."/>
            <person name="Senba T."/>
            <person name="Matsumura K."/>
            <person name="Nakajima Y."/>
            <person name="Mizuno T."/>
            <person name="Morinaga M."/>
            <person name="Sasaki M."/>
            <person name="Togashi T."/>
            <person name="Oyama M."/>
            <person name="Hata H."/>
            <person name="Watanabe M."/>
            <person name="Komatsu T."/>
            <person name="Mizushima-Sugano J."/>
            <person name="Satoh T."/>
            <person name="Shirai Y."/>
            <person name="Takahashi Y."/>
            <person name="Nakagawa K."/>
            <person name="Okumura K."/>
            <person name="Nagase T."/>
            <person name="Nomura N."/>
            <person name="Kikuchi H."/>
            <person name="Masuho Y."/>
            <person name="Yamashita R."/>
            <person name="Nakai K."/>
            <person name="Yada T."/>
            <person name="Nakamura Y."/>
            <person name="Ohara O."/>
            <person name="Isogai T."/>
            <person name="Sugano S."/>
        </authorList>
    </citation>
    <scope>NUCLEOTIDE SEQUENCE [LARGE SCALE MRNA] (ISOFORM 1)</scope>
</reference>
<reference key="3">
    <citation type="journal article" date="2004" name="Nature">
        <title>The DNA sequence and biology of human chromosome 19.</title>
        <authorList>
            <person name="Grimwood J."/>
            <person name="Gordon L.A."/>
            <person name="Olsen A.S."/>
            <person name="Terry A."/>
            <person name="Schmutz J."/>
            <person name="Lamerdin J.E."/>
            <person name="Hellsten U."/>
            <person name="Goodstein D."/>
            <person name="Couronne O."/>
            <person name="Tran-Gyamfi M."/>
            <person name="Aerts A."/>
            <person name="Altherr M."/>
            <person name="Ashworth L."/>
            <person name="Bajorek E."/>
            <person name="Black S."/>
            <person name="Branscomb E."/>
            <person name="Caenepeel S."/>
            <person name="Carrano A.V."/>
            <person name="Caoile C."/>
            <person name="Chan Y.M."/>
            <person name="Christensen M."/>
            <person name="Cleland C.A."/>
            <person name="Copeland A."/>
            <person name="Dalin E."/>
            <person name="Dehal P."/>
            <person name="Denys M."/>
            <person name="Detter J.C."/>
            <person name="Escobar J."/>
            <person name="Flowers D."/>
            <person name="Fotopulos D."/>
            <person name="Garcia C."/>
            <person name="Georgescu A.M."/>
            <person name="Glavina T."/>
            <person name="Gomez M."/>
            <person name="Gonzales E."/>
            <person name="Groza M."/>
            <person name="Hammon N."/>
            <person name="Hawkins T."/>
            <person name="Haydu L."/>
            <person name="Ho I."/>
            <person name="Huang W."/>
            <person name="Israni S."/>
            <person name="Jett J."/>
            <person name="Kadner K."/>
            <person name="Kimball H."/>
            <person name="Kobayashi A."/>
            <person name="Larionov V."/>
            <person name="Leem S.-H."/>
            <person name="Lopez F."/>
            <person name="Lou Y."/>
            <person name="Lowry S."/>
            <person name="Malfatti S."/>
            <person name="Martinez D."/>
            <person name="McCready P.M."/>
            <person name="Medina C."/>
            <person name="Morgan J."/>
            <person name="Nelson K."/>
            <person name="Nolan M."/>
            <person name="Ovcharenko I."/>
            <person name="Pitluck S."/>
            <person name="Pollard M."/>
            <person name="Popkie A.P."/>
            <person name="Predki P."/>
            <person name="Quan G."/>
            <person name="Ramirez L."/>
            <person name="Rash S."/>
            <person name="Retterer J."/>
            <person name="Rodriguez A."/>
            <person name="Rogers S."/>
            <person name="Salamov A."/>
            <person name="Salazar A."/>
            <person name="She X."/>
            <person name="Smith D."/>
            <person name="Slezak T."/>
            <person name="Solovyev V."/>
            <person name="Thayer N."/>
            <person name="Tice H."/>
            <person name="Tsai M."/>
            <person name="Ustaszewska A."/>
            <person name="Vo N."/>
            <person name="Wagner M."/>
            <person name="Wheeler J."/>
            <person name="Wu K."/>
            <person name="Xie G."/>
            <person name="Yang J."/>
            <person name="Dubchak I."/>
            <person name="Furey T.S."/>
            <person name="DeJong P."/>
            <person name="Dickson M."/>
            <person name="Gordon D."/>
            <person name="Eichler E.E."/>
            <person name="Pennacchio L.A."/>
            <person name="Richardson P."/>
            <person name="Stubbs L."/>
            <person name="Rokhsar D.S."/>
            <person name="Myers R.M."/>
            <person name="Rubin E.M."/>
            <person name="Lucas S.M."/>
        </authorList>
    </citation>
    <scope>NUCLEOTIDE SEQUENCE [LARGE SCALE GENOMIC DNA]</scope>
</reference>
<reference key="4">
    <citation type="submission" date="2005-09" db="EMBL/GenBank/DDBJ databases">
        <authorList>
            <person name="Mural R.J."/>
            <person name="Istrail S."/>
            <person name="Sutton G.G."/>
            <person name="Florea L."/>
            <person name="Halpern A.L."/>
            <person name="Mobarry C.M."/>
            <person name="Lippert R."/>
            <person name="Walenz B."/>
            <person name="Shatkay H."/>
            <person name="Dew I."/>
            <person name="Miller J.R."/>
            <person name="Flanigan M.J."/>
            <person name="Edwards N.J."/>
            <person name="Bolanos R."/>
            <person name="Fasulo D."/>
            <person name="Halldorsson B.V."/>
            <person name="Hannenhalli S."/>
            <person name="Turner R."/>
            <person name="Yooseph S."/>
            <person name="Lu F."/>
            <person name="Nusskern D.R."/>
            <person name="Shue B.C."/>
            <person name="Zheng X.H."/>
            <person name="Zhong F."/>
            <person name="Delcher A.L."/>
            <person name="Huson D.H."/>
            <person name="Kravitz S.A."/>
            <person name="Mouchard L."/>
            <person name="Reinert K."/>
            <person name="Remington K.A."/>
            <person name="Clark A.G."/>
            <person name="Waterman M.S."/>
            <person name="Eichler E.E."/>
            <person name="Adams M.D."/>
            <person name="Hunkapiller M.W."/>
            <person name="Myers E.W."/>
            <person name="Venter J.C."/>
        </authorList>
    </citation>
    <scope>NUCLEOTIDE SEQUENCE [LARGE SCALE GENOMIC DNA]</scope>
</reference>
<reference key="5">
    <citation type="journal article" date="2004" name="Genome Res.">
        <title>The status, quality, and expansion of the NIH full-length cDNA project: the Mammalian Gene Collection (MGC).</title>
        <authorList>
            <consortium name="The MGC Project Team"/>
        </authorList>
    </citation>
    <scope>NUCLEOTIDE SEQUENCE [LARGE SCALE MRNA] (ISOFORM 2)</scope>
    <source>
        <tissue>Brain</tissue>
        <tissue>Cervix</tissue>
        <tissue>Muscle</tissue>
        <tissue>Uterus</tissue>
    </source>
</reference>
<reference key="6">
    <citation type="journal article" date="2000" name="Genes Cells">
        <title>MBD2-MBD3 complex binds to hemi-methylated DNA and forms a complex containing DNMT1 at the replication foci in late S phase.</title>
        <authorList>
            <person name="Tatematsu K."/>
            <person name="Yamazaki T."/>
            <person name="Ishikawa F."/>
        </authorList>
    </citation>
    <scope>FUNCTION</scope>
    <scope>HETERODIMERIZATION WITH MBD2</scope>
    <scope>INTERACTION WITH DNMT1</scope>
</reference>
<reference key="7">
    <citation type="journal article" date="2001" name="J. Biol. Chem.">
        <title>Stable histone deacetylase complexes distinguished by the presence of SANT domain proteins CoREST/kiaa0071 and Mta-L1.</title>
        <authorList>
            <person name="Humphrey G.W."/>
            <person name="Wang Y."/>
            <person name="Russanova V.R."/>
            <person name="Hirai T."/>
            <person name="Qin J."/>
            <person name="Nakatani Y."/>
            <person name="Howard B.H."/>
        </authorList>
    </citation>
    <scope>INTERACTION WITH THE HDAC1 COMPLEX</scope>
    <scope>IDENTIFICATION BY MASS SPECTROMETRY</scope>
</reference>
<reference key="8">
    <citation type="journal article" date="2002" name="J. Biol. Chem.">
        <title>The mCpG-binding domain of human MBD3 does not bind to mCpG but interacts with NuRD/Mi2 components HDAC1 and MTA2.</title>
        <authorList>
            <person name="Saito M."/>
            <person name="Ishikawa F."/>
        </authorList>
    </citation>
    <scope>FUNCTION</scope>
    <scope>INTERACTION WITH HDAC1; MTA2 AND THE NURD COMPLEX</scope>
    <scope>MUTAGENESIS OF HIS-30 AND PHE-34</scope>
</reference>
<reference key="9">
    <citation type="journal article" date="2002" name="J. Biol. Chem.">
        <title>Two highly related p66 proteins comprise a new family of potent transcriptional repressors interacting with MBD2 and MBD3.</title>
        <authorList>
            <person name="Brackertz M."/>
            <person name="Boeke J."/>
            <person name="Zhang R."/>
            <person name="Renkawitz R."/>
        </authorList>
    </citation>
    <scope>INTERACTION WITH GATAD2A AND GATAD2B</scope>
</reference>
<reference key="10">
    <citation type="journal article" date="2002" name="Mol. Cell. Biol.">
        <title>Identification and functional characterization of the p66/p68 components of the MeCP1 complex.</title>
        <authorList>
            <person name="Feng Q."/>
            <person name="Cao R."/>
            <person name="Xia L."/>
            <person name="Erdjument-Bromage H."/>
            <person name="Tempst P."/>
            <person name="Zhang Y."/>
        </authorList>
    </citation>
    <scope>INTERACTION WITH GATAD2B AND THE MECP1 COMPLEX</scope>
</reference>
<reference key="11">
    <citation type="journal article" date="2004" name="Cell">
        <title>MTA3 and the Mi-2/NuRD complex regulate cell fate during B lymphocyte differentiation.</title>
        <authorList>
            <person name="Fujita N."/>
            <person name="Jaye D.L."/>
            <person name="Geigerman C."/>
            <person name="Akyildiz A."/>
            <person name="Mooney M.R."/>
            <person name="Boss J.M."/>
            <person name="Wade P.A."/>
        </authorList>
    </citation>
    <scope>INTERACTION WITH BCL6</scope>
    <scope>IDENTIFICATION IN THE NURD COMPLEX</scope>
</reference>
<reference key="12">
    <citation type="journal article" date="2005" name="J. Biol. Chem.">
        <title>MBD3L2 interacts with MBD3 and components of the NuRD complex and can oppose MBD2-MeCP1-mediated methylation silencing.</title>
        <authorList>
            <person name="Jin S.-G."/>
            <person name="Jiang C.-L."/>
            <person name="Rauch T."/>
            <person name="Li H."/>
            <person name="Pfeifer G.P."/>
        </authorList>
    </citation>
    <scope>INTERACTION WITH MBD2 AND MBD3L2</scope>
    <scope>SUBCELLULAR LOCATION</scope>
</reference>
<reference key="13">
    <citation type="journal article" date="2006" name="Cell">
        <title>Global, in vivo, and site-specific phosphorylation dynamics in signaling networks.</title>
        <authorList>
            <person name="Olsen J.V."/>
            <person name="Blagoev B."/>
            <person name="Gnad F."/>
            <person name="Macek B."/>
            <person name="Kumar C."/>
            <person name="Mortensen P."/>
            <person name="Mann M."/>
        </authorList>
    </citation>
    <scope>IDENTIFICATION BY MASS SPECTROMETRY [LARGE SCALE ANALYSIS]</scope>
    <source>
        <tissue>Cervix carcinoma</tissue>
    </source>
</reference>
<reference key="14">
    <citation type="journal article" date="2006" name="Mol. Cell. Biol.">
        <title>MBD2/NuRD and MBD3/NuRD, two distinct complexes with different biochemical and functional properties.</title>
        <authorList>
            <person name="Le Guezennec X."/>
            <person name="Vermeulen M."/>
            <person name="Brinkman A.B."/>
            <person name="Hoeijmakers W.A."/>
            <person name="Cohen A."/>
            <person name="Lasonder E."/>
            <person name="Stunnenberg H.G."/>
        </authorList>
    </citation>
    <scope>FUNCTION</scope>
    <scope>IDENTIFICATION IN THE NURD COMPLEX</scope>
    <scope>IDENTIFICATION BY MASS SPECTROMETRY</scope>
</reference>
<reference key="15">
    <citation type="journal article" date="2008" name="Mol. Cell. Biol.">
        <title>MBD3, a component of the NuRD complex, facilitates chromatin alteration and deposition of epigenetic marks.</title>
        <authorList>
            <person name="Morey L."/>
            <person name="Brenner C."/>
            <person name="Fazi F."/>
            <person name="Villa R."/>
            <person name="Gutierrez A."/>
            <person name="Buschbeck M."/>
            <person name="Nervi C."/>
            <person name="Minucci S."/>
            <person name="Fuks F."/>
            <person name="Di Croce L."/>
        </authorList>
    </citation>
    <scope>FUNCTION</scope>
</reference>
<reference key="16">
    <citation type="journal article" date="2008" name="Proc. Natl. Acad. Sci. U.S.A.">
        <title>A quantitative atlas of mitotic phosphorylation.</title>
        <authorList>
            <person name="Dephoure N."/>
            <person name="Zhou C."/>
            <person name="Villen J."/>
            <person name="Beausoleil S.A."/>
            <person name="Bakalarski C.E."/>
            <person name="Elledge S.J."/>
            <person name="Gygi S.P."/>
        </authorList>
    </citation>
    <scope>PHOSPHORYLATION [LARGE SCALE ANALYSIS] AT SER-56</scope>
    <scope>IDENTIFICATION BY MASS SPECTROMETRY [LARGE SCALE ANALYSIS]</scope>
    <source>
        <tissue>Cervix carcinoma</tissue>
    </source>
</reference>
<reference key="17">
    <citation type="journal article" date="2009" name="Sci. Signal.">
        <title>Quantitative phosphoproteomic analysis of T cell receptor signaling reveals system-wide modulation of protein-protein interactions.</title>
        <authorList>
            <person name="Mayya V."/>
            <person name="Lundgren D.H."/>
            <person name="Hwang S.-I."/>
            <person name="Rezaul K."/>
            <person name="Wu L."/>
            <person name="Eng J.K."/>
            <person name="Rodionov V."/>
            <person name="Han D.K."/>
        </authorList>
    </citation>
    <scope>PHOSPHORYLATION [LARGE SCALE ANALYSIS] AT SER-56 AND SER-144</scope>
    <scope>IDENTIFICATION BY MASS SPECTROMETRY [LARGE SCALE ANALYSIS]</scope>
    <source>
        <tissue>Leukemic T-cell</tissue>
    </source>
</reference>
<reference key="18">
    <citation type="journal article" date="2009" name="Science">
        <title>Lysine acetylation targets protein complexes and co-regulates major cellular functions.</title>
        <authorList>
            <person name="Choudhary C."/>
            <person name="Kumar C."/>
            <person name="Gnad F."/>
            <person name="Nielsen M.L."/>
            <person name="Rehman M."/>
            <person name="Walther T.C."/>
            <person name="Olsen J.V."/>
            <person name="Mann M."/>
        </authorList>
    </citation>
    <scope>IDENTIFICATION BY MASS SPECTROMETRY [LARGE SCALE ANALYSIS]</scope>
</reference>
<reference key="19">
    <citation type="journal article" date="2010" name="Mol. Biosyst.">
        <title>CDK2AP1/DOC-1 is a bona fide subunit of the Mi-2/NuRD complex.</title>
        <authorList>
            <person name="Spruijt C.G."/>
            <person name="Bartels S.J."/>
            <person name="Brinkman A.B."/>
            <person name="Tjeertes J.V."/>
            <person name="Poser I."/>
            <person name="Stunnenberg H.G."/>
            <person name="Vermeulen M."/>
        </authorList>
    </citation>
    <scope>INTERACTION WITH CDK2AP1</scope>
    <scope>IDENTIFICATION BY MASS SPECTROMETRY</scope>
    <scope>SUBCELLULAR LOCATION</scope>
</reference>
<reference key="20">
    <citation type="journal article" date="2010" name="Sci. Signal.">
        <title>Quantitative phosphoproteomics reveals widespread full phosphorylation site occupancy during mitosis.</title>
        <authorList>
            <person name="Olsen J.V."/>
            <person name="Vermeulen M."/>
            <person name="Santamaria A."/>
            <person name="Kumar C."/>
            <person name="Miller M.L."/>
            <person name="Jensen L.J."/>
            <person name="Gnad F."/>
            <person name="Cox J."/>
            <person name="Jensen T.S."/>
            <person name="Nigg E.A."/>
            <person name="Brunak S."/>
            <person name="Mann M."/>
        </authorList>
    </citation>
    <scope>PHOSPHORYLATION [LARGE SCALE ANALYSIS] AT SER-56; SER-85 AND SER-144</scope>
    <scope>IDENTIFICATION BY MASS SPECTROMETRY [LARGE SCALE ANALYSIS]</scope>
    <source>
        <tissue>Cervix carcinoma</tissue>
    </source>
</reference>
<reference key="21">
    <citation type="journal article" date="2011" name="BMC Syst. Biol.">
        <title>Initial characterization of the human central proteome.</title>
        <authorList>
            <person name="Burkard T.R."/>
            <person name="Planyavsky M."/>
            <person name="Kaupe I."/>
            <person name="Breitwieser F.P."/>
            <person name="Buerckstuemmer T."/>
            <person name="Bennett K.L."/>
            <person name="Superti-Furga G."/>
            <person name="Colinge J."/>
        </authorList>
    </citation>
    <scope>IDENTIFICATION BY MASS SPECTROMETRY [LARGE SCALE ANALYSIS]</scope>
</reference>
<reference key="22">
    <citation type="journal article" date="2011" name="Sci. Signal.">
        <title>System-wide temporal characterization of the proteome and phosphoproteome of human embryonic stem cell differentiation.</title>
        <authorList>
            <person name="Rigbolt K.T."/>
            <person name="Prokhorova T.A."/>
            <person name="Akimov V."/>
            <person name="Henningsen J."/>
            <person name="Johansen P.T."/>
            <person name="Kratchmarova I."/>
            <person name="Kassem M."/>
            <person name="Mann M."/>
            <person name="Olsen J.V."/>
            <person name="Blagoev B."/>
        </authorList>
    </citation>
    <scope>PHOSPHORYLATION [LARGE SCALE ANALYSIS] AT SER-56 AND SER-85</scope>
    <scope>IDENTIFICATION BY MASS SPECTROMETRY [LARGE SCALE ANALYSIS]</scope>
</reference>
<reference key="23">
    <citation type="journal article" date="2013" name="J. Proteome Res.">
        <title>Toward a comprehensive characterization of a human cancer cell phosphoproteome.</title>
        <authorList>
            <person name="Zhou H."/>
            <person name="Di Palma S."/>
            <person name="Preisinger C."/>
            <person name="Peng M."/>
            <person name="Polat A.N."/>
            <person name="Heck A.J."/>
            <person name="Mohammed S."/>
        </authorList>
    </citation>
    <scope>PHOSPHORYLATION [LARGE SCALE ANALYSIS] AT SER-56 AND SER-85</scope>
    <scope>IDENTIFICATION BY MASS SPECTROMETRY [LARGE SCALE ANALYSIS]</scope>
    <source>
        <tissue>Cervix carcinoma</tissue>
        <tissue>Erythroleukemia</tissue>
    </source>
</reference>
<reference key="24">
    <citation type="journal article" date="2013" name="Nucleic Acids Res.">
        <title>Differential roles for MBD2 and MBD3 at methylated CpG islands, active promoters and binding to exon sequences.</title>
        <authorList>
            <person name="Gunther K."/>
            <person name="Rust M."/>
            <person name="Leers J."/>
            <person name="Boettger T."/>
            <person name="Scharfe M."/>
            <person name="Jarek M."/>
            <person name="Bartkuhn M."/>
            <person name="Renkawitz R."/>
        </authorList>
    </citation>
    <scope>FUNCTION</scope>
    <scope>SUBCELLULAR LOCATION</scope>
</reference>
<reference key="25">
    <citation type="journal article" date="2013" name="PLoS Genet.">
        <title>MBD3 localizes at promoters, gene bodies and enhancers of active genes.</title>
        <authorList>
            <person name="Shimbo T."/>
            <person name="Du Y."/>
            <person name="Grimm S.A."/>
            <person name="Dhasarathy A."/>
            <person name="Mav D."/>
            <person name="Shah R.R."/>
            <person name="Shi H."/>
            <person name="Wade P.A."/>
        </authorList>
    </citation>
    <scope>SUBCELLULAR LOCATION</scope>
</reference>
<reference key="26">
    <citation type="journal article" date="2016" name="Cell Rep.">
        <title>ZMYND8 Co-localizes with NuRD on Target Genes and Regulates Poly(ADP-Ribose)-Dependent Recruitment of GATAD2A/NuRD to Sites of DNA Damage.</title>
        <authorList>
            <person name="Spruijt C.G."/>
            <person name="Luijsterburg M.S."/>
            <person name="Menafra R."/>
            <person name="Lindeboom R.G."/>
            <person name="Jansen P.W."/>
            <person name="Edupuganti R.R."/>
            <person name="Baltissen M.P."/>
            <person name="Wiegant W.W."/>
            <person name="Voelker-Albert M.C."/>
            <person name="Matarese F."/>
            <person name="Mensinga A."/>
            <person name="Poser I."/>
            <person name="Vos H.R."/>
            <person name="Stunnenberg H.G."/>
            <person name="van Attikum H."/>
            <person name="Vermeulen M."/>
        </authorList>
    </citation>
    <scope>INTERACTION WITH GATAD2A AND GATAD2B</scope>
    <scope>IDENTIFICATION IN THE NURD COMPLEX</scope>
    <scope>IDENTIFICATION BY MASS SPECTROMETRY</scope>
    <scope>SUBCELLULAR LOCATION</scope>
</reference>
<reference key="27">
    <citation type="journal article" date="2017" name="Nat. Struct. Mol. Biol.">
        <title>Site-specific mapping of the human SUMO proteome reveals co-modification with phosphorylation.</title>
        <authorList>
            <person name="Hendriks I.A."/>
            <person name="Lyon D."/>
            <person name="Young C."/>
            <person name="Jensen L.J."/>
            <person name="Vertegaal A.C."/>
            <person name="Nielsen M.L."/>
        </authorList>
    </citation>
    <scope>SUMOYLATION [LARGE SCALE ANALYSIS] AT LYS-73; LYS-90 AND LYS-92</scope>
    <scope>IDENTIFICATION BY MASS SPECTROMETRY [LARGE SCALE ANALYSIS]</scope>
</reference>
<reference key="28">
    <citation type="journal article" date="2017" name="Nucleic Acids Res.">
        <title>CHD3 and CHD4 form distinct NuRD complexes with different yet overlapping functionality.</title>
        <authorList>
            <person name="Hoffmeister H."/>
            <person name="Fuchs A."/>
            <person name="Erdel F."/>
            <person name="Pinz S."/>
            <person name="Groebner-Ferreira R."/>
            <person name="Bruckmann A."/>
            <person name="Deutzmann R."/>
            <person name="Schwartz U."/>
            <person name="Maldonado R."/>
            <person name="Huber C."/>
            <person name="Dendorfer A.S."/>
            <person name="Rippe K."/>
            <person name="Laengst G."/>
        </authorList>
    </citation>
    <scope>FUNCTION</scope>
    <scope>IDENTIFICATION IN THE NURD COMPLEX</scope>
    <scope>IDENTIFICATION BY MASS SPECTROMETRY</scope>
    <scope>SUBCELLULAR LOCATION</scope>
</reference>
<reference key="29">
    <citation type="journal article" date="2021" name="FEBS J.">
        <title>Cross-linking mass spectrometry reveals the structural topology of peripheral NuRD subunits relative to the core complex.</title>
        <authorList>
            <person name="Spruijt C.G."/>
            <person name="Graewe C."/>
            <person name="Kleinendorst S.C."/>
            <person name="Baltissen M.P.A."/>
            <person name="Vermeulen M."/>
        </authorList>
    </citation>
    <scope>IDENTIFICATION IN THE NURD COMPLEX</scope>
    <scope>IDENTIFICATION BY MASS SPECTROMETRY</scope>
    <scope>SUBCELLULAR LOCATION</scope>
</reference>
<reference key="30">
    <citation type="journal article" date="2014" name="J. Biol. Chem.">
        <title>Probing the dynamic distribution of bound states for methylcytosine-binding domains on DNA.</title>
        <authorList>
            <person name="Cramer J.M."/>
            <person name="Scarsdale J.N."/>
            <person name="Walavalkar N.M."/>
            <person name="Buchwald W.A."/>
            <person name="Ginder G.D."/>
            <person name="Williams D.C. Jr."/>
        </authorList>
    </citation>
    <scope>STRUCTURE BY NMR OF 1-70</scope>
    <scope>FUNCTION</scope>
    <scope>DNA-BINDING</scope>
    <scope>MUTAGENESIS OF HIS-30 AND PHE-34</scope>
</reference>
<accession>O95983</accession>
<accession>A8K4B7</accession>
<accession>D6W5Z2</accession>
<accession>Q6PIL9</accession>
<accession>Q6PJZ9</accession>
<accession>Q86XF4</accession>
<keyword id="KW-0002">3D-structure</keyword>
<keyword id="KW-0025">Alternative splicing</keyword>
<keyword id="KW-0158">Chromosome</keyword>
<keyword id="KW-0175">Coiled coil</keyword>
<keyword id="KW-0238">DNA-binding</keyword>
<keyword id="KW-1017">Isopeptide bond</keyword>
<keyword id="KW-0539">Nucleus</keyword>
<keyword id="KW-0597">Phosphoprotein</keyword>
<keyword id="KW-1267">Proteomics identification</keyword>
<keyword id="KW-1185">Reference proteome</keyword>
<keyword id="KW-0804">Transcription</keyword>
<keyword id="KW-0805">Transcription regulation</keyword>
<keyword id="KW-0832">Ubl conjugation</keyword>
<organism>
    <name type="scientific">Homo sapiens</name>
    <name type="common">Human</name>
    <dbReference type="NCBI Taxonomy" id="9606"/>
    <lineage>
        <taxon>Eukaryota</taxon>
        <taxon>Metazoa</taxon>
        <taxon>Chordata</taxon>
        <taxon>Craniata</taxon>
        <taxon>Vertebrata</taxon>
        <taxon>Euteleostomi</taxon>
        <taxon>Mammalia</taxon>
        <taxon>Eutheria</taxon>
        <taxon>Euarchontoglires</taxon>
        <taxon>Primates</taxon>
        <taxon>Haplorrhini</taxon>
        <taxon>Catarrhini</taxon>
        <taxon>Hominidae</taxon>
        <taxon>Homo</taxon>
    </lineage>
</organism>
<protein>
    <recommendedName>
        <fullName>Methyl-CpG-binding domain protein 3</fullName>
    </recommendedName>
    <alternativeName>
        <fullName>Methyl-CpG-binding protein MBD3</fullName>
    </alternativeName>
</protein>
<dbReference type="EMBL" id="AF072247">
    <property type="protein sequence ID" value="AAC68876.1"/>
    <property type="molecule type" value="mRNA"/>
</dbReference>
<dbReference type="EMBL" id="AK290882">
    <property type="protein sequence ID" value="BAF83571.1"/>
    <property type="molecule type" value="mRNA"/>
</dbReference>
<dbReference type="EMBL" id="AC005943">
    <property type="protein sequence ID" value="AAC72104.1"/>
    <property type="molecule type" value="Genomic_DNA"/>
</dbReference>
<dbReference type="EMBL" id="CH471139">
    <property type="protein sequence ID" value="EAW69477.1"/>
    <property type="molecule type" value="Genomic_DNA"/>
</dbReference>
<dbReference type="EMBL" id="CH471139">
    <property type="protein sequence ID" value="EAW69478.1"/>
    <property type="molecule type" value="Genomic_DNA"/>
</dbReference>
<dbReference type="EMBL" id="CH471139">
    <property type="protein sequence ID" value="EAW69481.1"/>
    <property type="molecule type" value="Genomic_DNA"/>
</dbReference>
<dbReference type="EMBL" id="BC009372">
    <property type="protein sequence ID" value="AAH09372.1"/>
    <property type="molecule type" value="mRNA"/>
</dbReference>
<dbReference type="EMBL" id="BC009438">
    <property type="protein sequence ID" value="AAH09438.1"/>
    <property type="molecule type" value="mRNA"/>
</dbReference>
<dbReference type="EMBL" id="BC032443">
    <property type="protein sequence ID" value="AAH32443.1"/>
    <property type="status" value="ALT_INIT"/>
    <property type="molecule type" value="mRNA"/>
</dbReference>
<dbReference type="EMBL" id="BC043619">
    <property type="protein sequence ID" value="AAH43619.1"/>
    <property type="molecule type" value="mRNA"/>
</dbReference>
<dbReference type="CCDS" id="CCDS12072.1">
    <molecule id="O95983-1"/>
</dbReference>
<dbReference type="CCDS" id="CCDS62481.1">
    <molecule id="O95983-2"/>
</dbReference>
<dbReference type="RefSeq" id="NP_001268382.1">
    <molecule id="O95983-1"/>
    <property type="nucleotide sequence ID" value="NM_001281453.2"/>
</dbReference>
<dbReference type="RefSeq" id="NP_001268383.1">
    <molecule id="O95983-2"/>
    <property type="nucleotide sequence ID" value="NM_001281454.2"/>
</dbReference>
<dbReference type="RefSeq" id="XP_047294895.1">
    <molecule id="O95983-1"/>
    <property type="nucleotide sequence ID" value="XM_047438939.1"/>
</dbReference>
<dbReference type="RefSeq" id="XP_054177198.1">
    <molecule id="O95983-1"/>
    <property type="nucleotide sequence ID" value="XM_054321223.1"/>
</dbReference>
<dbReference type="PDB" id="2MB7">
    <property type="method" value="NMR"/>
    <property type="chains" value="A=1-70"/>
</dbReference>
<dbReference type="PDB" id="6CC8">
    <property type="method" value="X-ray"/>
    <property type="resolution" value="1.95 A"/>
    <property type="chains" value="A/B=1-71"/>
</dbReference>
<dbReference type="PDB" id="6CCG">
    <property type="method" value="X-ray"/>
    <property type="resolution" value="1.90 A"/>
    <property type="chains" value="A/B=1-71"/>
</dbReference>
<dbReference type="PDB" id="6CEU">
    <property type="method" value="X-ray"/>
    <property type="resolution" value="2.00 A"/>
    <property type="chains" value="A/B=1-71"/>
</dbReference>
<dbReference type="PDB" id="6CEV">
    <property type="method" value="X-ray"/>
    <property type="resolution" value="2.00 A"/>
    <property type="chains" value="A/B=1-71"/>
</dbReference>
<dbReference type="PDBsum" id="2MB7"/>
<dbReference type="PDBsum" id="6CC8"/>
<dbReference type="PDBsum" id="6CCG"/>
<dbReference type="PDBsum" id="6CEU"/>
<dbReference type="PDBsum" id="6CEV"/>
<dbReference type="BMRB" id="O95983"/>
<dbReference type="SMR" id="O95983"/>
<dbReference type="BioGRID" id="119788">
    <property type="interactions" value="297"/>
</dbReference>
<dbReference type="ComplexPortal" id="CPX-922">
    <property type="entry name" value="MBD3/NuRD nucleosome remodeling and deacetylase complex"/>
</dbReference>
<dbReference type="CORUM" id="O95983"/>
<dbReference type="DIP" id="DIP-46517N"/>
<dbReference type="FunCoup" id="O95983">
    <property type="interactions" value="1628"/>
</dbReference>
<dbReference type="IntAct" id="O95983">
    <property type="interactions" value="138"/>
</dbReference>
<dbReference type="MINT" id="O95983"/>
<dbReference type="STRING" id="9606.ENSP00000412302"/>
<dbReference type="GlyGen" id="O95983">
    <property type="glycosylation" value="1 site, 1 O-linked glycan (1 site)"/>
</dbReference>
<dbReference type="iPTMnet" id="O95983"/>
<dbReference type="MetOSite" id="O95983"/>
<dbReference type="PhosphoSitePlus" id="O95983"/>
<dbReference type="BioMuta" id="MBD3"/>
<dbReference type="jPOST" id="O95983"/>
<dbReference type="MassIVE" id="O95983"/>
<dbReference type="PaxDb" id="9606-ENSP00000412302"/>
<dbReference type="PeptideAtlas" id="O95983"/>
<dbReference type="ProteomicsDB" id="51159">
    <molecule id="O95983-1"/>
</dbReference>
<dbReference type="ProteomicsDB" id="51160">
    <molecule id="O95983-2"/>
</dbReference>
<dbReference type="Pumba" id="O95983"/>
<dbReference type="Antibodypedia" id="22760">
    <property type="antibodies" value="437 antibodies from 42 providers"/>
</dbReference>
<dbReference type="DNASU" id="53615"/>
<dbReference type="Ensembl" id="ENST00000156825.5">
    <molecule id="O95983-2"/>
    <property type="protein sequence ID" value="ENSP00000156825.2"/>
    <property type="gene ID" value="ENSG00000071655.18"/>
</dbReference>
<dbReference type="Ensembl" id="ENST00000434436.8">
    <molecule id="O95983-1"/>
    <property type="protein sequence ID" value="ENSP00000412302.2"/>
    <property type="gene ID" value="ENSG00000071655.18"/>
</dbReference>
<dbReference type="GeneID" id="53615"/>
<dbReference type="KEGG" id="hsa:53615"/>
<dbReference type="MANE-Select" id="ENST00000434436.8">
    <property type="protein sequence ID" value="ENSP00000412302.2"/>
    <property type="RefSeq nucleotide sequence ID" value="NM_001281453.2"/>
    <property type="RefSeq protein sequence ID" value="NP_001268382.1"/>
</dbReference>
<dbReference type="UCSC" id="uc002ltj.5">
    <molecule id="O95983-1"/>
    <property type="organism name" value="human"/>
</dbReference>
<dbReference type="AGR" id="HGNC:6918"/>
<dbReference type="CTD" id="53615"/>
<dbReference type="DisGeNET" id="53615"/>
<dbReference type="GeneCards" id="MBD3"/>
<dbReference type="HGNC" id="HGNC:6918">
    <property type="gene designation" value="MBD3"/>
</dbReference>
<dbReference type="HPA" id="ENSG00000071655">
    <property type="expression patterns" value="Low tissue specificity"/>
</dbReference>
<dbReference type="MalaCards" id="MBD3"/>
<dbReference type="MIM" id="603573">
    <property type="type" value="gene"/>
</dbReference>
<dbReference type="neXtProt" id="NX_O95983"/>
<dbReference type="OpenTargets" id="ENSG00000071655"/>
<dbReference type="PharmGKB" id="PA30661"/>
<dbReference type="VEuPathDB" id="HostDB:ENSG00000071655"/>
<dbReference type="eggNOG" id="KOG4161">
    <property type="taxonomic scope" value="Eukaryota"/>
</dbReference>
<dbReference type="GeneTree" id="ENSGT00950000183005"/>
<dbReference type="HOGENOM" id="CLU_069710_0_0_1"/>
<dbReference type="InParanoid" id="O95983"/>
<dbReference type="OMA" id="GKMQIQR"/>
<dbReference type="OrthoDB" id="10072024at2759"/>
<dbReference type="PAN-GO" id="O95983">
    <property type="GO annotations" value="0 GO annotations based on evolutionary models"/>
</dbReference>
<dbReference type="PhylomeDB" id="O95983"/>
<dbReference type="TreeFam" id="TF325032"/>
<dbReference type="PathwayCommons" id="O95983"/>
<dbReference type="Reactome" id="R-HSA-3214815">
    <property type="pathway name" value="HDACs deacetylate histones"/>
</dbReference>
<dbReference type="Reactome" id="R-HSA-427389">
    <property type="pathway name" value="ERCC6 (CSB) and EHMT2 (G9a) positively regulate rRNA expression"/>
</dbReference>
<dbReference type="Reactome" id="R-HSA-6804758">
    <property type="pathway name" value="Regulation of TP53 Activity through Acetylation"/>
</dbReference>
<dbReference type="Reactome" id="R-HSA-73762">
    <property type="pathway name" value="RNA Polymerase I Transcription Initiation"/>
</dbReference>
<dbReference type="Reactome" id="R-HSA-8943724">
    <property type="pathway name" value="Regulation of PTEN gene transcription"/>
</dbReference>
<dbReference type="Reactome" id="R-HSA-9679191">
    <property type="pathway name" value="Potential therapeutics for SARS"/>
</dbReference>
<dbReference type="Reactome" id="R-HSA-9843940">
    <property type="pathway name" value="Regulation of endogenous retroelements by KRAB-ZFP proteins"/>
</dbReference>
<dbReference type="Reactome" id="R-HSA-9844594">
    <property type="pathway name" value="Transcriptional regulation of brown and beige adipocyte differentiation by EBF2"/>
</dbReference>
<dbReference type="Reactome" id="R-HSA-9845323">
    <property type="pathway name" value="Regulation of endogenous retroelements by Piwi-interacting RNAs (piRNAs)"/>
</dbReference>
<dbReference type="SignaLink" id="O95983"/>
<dbReference type="SIGNOR" id="O95983"/>
<dbReference type="BioGRID-ORCS" id="53615">
    <property type="hits" value="63 hits in 1177 CRISPR screens"/>
</dbReference>
<dbReference type="CD-CODE" id="8C2F96ED">
    <property type="entry name" value="Centrosome"/>
</dbReference>
<dbReference type="ChiTaRS" id="MBD3">
    <property type="organism name" value="human"/>
</dbReference>
<dbReference type="EvolutionaryTrace" id="O95983"/>
<dbReference type="GeneWiki" id="MBD3"/>
<dbReference type="GenomeRNAi" id="53615"/>
<dbReference type="Pharos" id="O95983">
    <property type="development level" value="Tbio"/>
</dbReference>
<dbReference type="PRO" id="PR:O95983"/>
<dbReference type="Proteomes" id="UP000005640">
    <property type="component" value="Chromosome 19"/>
</dbReference>
<dbReference type="RNAct" id="O95983">
    <property type="molecule type" value="protein"/>
</dbReference>
<dbReference type="Bgee" id="ENSG00000071655">
    <property type="expression patterns" value="Expressed in apex of heart and 197 other cell types or tissues"/>
</dbReference>
<dbReference type="ExpressionAtlas" id="O95983">
    <property type="expression patterns" value="baseline and differential"/>
</dbReference>
<dbReference type="GO" id="GO:0000785">
    <property type="term" value="C:chromatin"/>
    <property type="evidence" value="ECO:0007005"/>
    <property type="project" value="UniProtKB"/>
</dbReference>
<dbReference type="GO" id="GO:0005737">
    <property type="term" value="C:cytoplasm"/>
    <property type="evidence" value="ECO:0007669"/>
    <property type="project" value="Ensembl"/>
</dbReference>
<dbReference type="GO" id="GO:0000792">
    <property type="term" value="C:heterochromatin"/>
    <property type="evidence" value="ECO:0007669"/>
    <property type="project" value="Ensembl"/>
</dbReference>
<dbReference type="GO" id="GO:0005654">
    <property type="term" value="C:nucleoplasm"/>
    <property type="evidence" value="ECO:0000314"/>
    <property type="project" value="HPA"/>
</dbReference>
<dbReference type="GO" id="GO:0005634">
    <property type="term" value="C:nucleus"/>
    <property type="evidence" value="ECO:0000314"/>
    <property type="project" value="UniProtKB"/>
</dbReference>
<dbReference type="GO" id="GO:0016581">
    <property type="term" value="C:NuRD complex"/>
    <property type="evidence" value="ECO:0000314"/>
    <property type="project" value="UniProtKB"/>
</dbReference>
<dbReference type="GO" id="GO:0032991">
    <property type="term" value="C:protein-containing complex"/>
    <property type="evidence" value="ECO:0007005"/>
    <property type="project" value="UniProtKB"/>
</dbReference>
<dbReference type="GO" id="GO:0003677">
    <property type="term" value="F:DNA binding"/>
    <property type="evidence" value="ECO:0000304"/>
    <property type="project" value="ProtInc"/>
</dbReference>
<dbReference type="GO" id="GO:0008327">
    <property type="term" value="F:methyl-CpG binding"/>
    <property type="evidence" value="ECO:0000314"/>
    <property type="project" value="UniProtKB"/>
</dbReference>
<dbReference type="GO" id="GO:0006338">
    <property type="term" value="P:chromatin remodeling"/>
    <property type="evidence" value="ECO:0000314"/>
    <property type="project" value="UniProtKB"/>
</dbReference>
<dbReference type="GO" id="GO:0006346">
    <property type="term" value="P:DNA methylation-dependent constitutive heterochromatin formation"/>
    <property type="evidence" value="ECO:0000318"/>
    <property type="project" value="GO_Central"/>
</dbReference>
<dbReference type="GO" id="GO:0048568">
    <property type="term" value="P:embryonic organ development"/>
    <property type="evidence" value="ECO:0007669"/>
    <property type="project" value="Ensembl"/>
</dbReference>
<dbReference type="GO" id="GO:0001701">
    <property type="term" value="P:in utero embryonic development"/>
    <property type="evidence" value="ECO:0007669"/>
    <property type="project" value="Ensembl"/>
</dbReference>
<dbReference type="GO" id="GO:0045892">
    <property type="term" value="P:negative regulation of DNA-templated transcription"/>
    <property type="evidence" value="ECO:0000303"/>
    <property type="project" value="ComplexPortal"/>
</dbReference>
<dbReference type="GO" id="GO:0000122">
    <property type="term" value="P:negative regulation of transcription by RNA polymerase II"/>
    <property type="evidence" value="ECO:0000318"/>
    <property type="project" value="GO_Central"/>
</dbReference>
<dbReference type="GO" id="GO:0045893">
    <property type="term" value="P:positive regulation of DNA-templated transcription"/>
    <property type="evidence" value="ECO:0000303"/>
    <property type="project" value="ComplexPortal"/>
</dbReference>
<dbReference type="GO" id="GO:0042659">
    <property type="term" value="P:regulation of cell fate specification"/>
    <property type="evidence" value="ECO:0000303"/>
    <property type="project" value="ComplexPortal"/>
</dbReference>
<dbReference type="GO" id="GO:2000736">
    <property type="term" value="P:regulation of stem cell differentiation"/>
    <property type="evidence" value="ECO:0000303"/>
    <property type="project" value="ComplexPortal"/>
</dbReference>
<dbReference type="GO" id="GO:0032355">
    <property type="term" value="P:response to estradiol"/>
    <property type="evidence" value="ECO:0007669"/>
    <property type="project" value="Ensembl"/>
</dbReference>
<dbReference type="GO" id="GO:0031667">
    <property type="term" value="P:response to nutrient levels"/>
    <property type="evidence" value="ECO:0007669"/>
    <property type="project" value="Ensembl"/>
</dbReference>
<dbReference type="GO" id="GO:0003229">
    <property type="term" value="P:ventricular cardiac muscle tissue development"/>
    <property type="evidence" value="ECO:0007669"/>
    <property type="project" value="Ensembl"/>
</dbReference>
<dbReference type="CDD" id="cd01396">
    <property type="entry name" value="MeCP2_MBD"/>
    <property type="match status" value="1"/>
</dbReference>
<dbReference type="FunFam" id="3.30.890.10:FF:000003">
    <property type="entry name" value="methyl-CpG-binding domain protein 2"/>
    <property type="match status" value="1"/>
</dbReference>
<dbReference type="Gene3D" id="3.30.890.10">
    <property type="entry name" value="Methyl-cpg-binding Protein 2, Chain A"/>
    <property type="match status" value="1"/>
</dbReference>
<dbReference type="IDEAL" id="IID00697"/>
<dbReference type="InterPro" id="IPR016177">
    <property type="entry name" value="DNA-bd_dom_sf"/>
</dbReference>
<dbReference type="InterPro" id="IPR032343">
    <property type="entry name" value="MBD2/MBD3_p55-bd"/>
</dbReference>
<dbReference type="InterPro" id="IPR025884">
    <property type="entry name" value="MeCpG-bd_2/3_C_dom"/>
</dbReference>
<dbReference type="InterPro" id="IPR001739">
    <property type="entry name" value="Methyl_CpG_DNA-bd"/>
</dbReference>
<dbReference type="PANTHER" id="PTHR12396">
    <property type="entry name" value="METHYL-CPG BINDING PROTEIN, MBD"/>
    <property type="match status" value="1"/>
</dbReference>
<dbReference type="PANTHER" id="PTHR12396:SF12">
    <property type="entry name" value="METHYL-CPG-BINDING DOMAIN PROTEIN 3"/>
    <property type="match status" value="1"/>
</dbReference>
<dbReference type="Pfam" id="PF01429">
    <property type="entry name" value="MBD"/>
    <property type="match status" value="1"/>
</dbReference>
<dbReference type="Pfam" id="PF14048">
    <property type="entry name" value="MBD_C"/>
    <property type="match status" value="1"/>
</dbReference>
<dbReference type="Pfam" id="PF16564">
    <property type="entry name" value="MBDa"/>
    <property type="match status" value="1"/>
</dbReference>
<dbReference type="SMART" id="SM00391">
    <property type="entry name" value="MBD"/>
    <property type="match status" value="1"/>
</dbReference>
<dbReference type="SUPFAM" id="SSF54171">
    <property type="entry name" value="DNA-binding domain"/>
    <property type="match status" value="1"/>
</dbReference>
<dbReference type="PROSITE" id="PS50982">
    <property type="entry name" value="MBD"/>
    <property type="match status" value="1"/>
</dbReference>
<gene>
    <name type="primary">MBD3</name>
</gene>
<sequence>MERKRWECPALPQGWEREEVPRRSGLSAGHRDVFYYSPSGKKFRSKPQLARYLGGSMDLSTFDFRTGKMLMSKMNKSRQRVRYDSSNQVKGKPDLNTALPVRQTASIFKQPVTKITNHPSNKVKSDPQKAVDQPRQLFWEKKLSGLNAFDIAEELVKTMDLPKGLQGVGPGCTDETLLSAIASALHTSTMPITGQLSAAVEKNPGVWLNTTQPLCKAFMVTDEDIRKQEELVQQVRKRLEEALMADMLAHVEELARDGEAPLDKACAEDDDEEDEEEEEEEPDPDPEMEHV</sequence>
<evidence type="ECO:0000250" key="1">
    <source>
        <dbReference type="UniProtKB" id="Q9Z2D8"/>
    </source>
</evidence>
<evidence type="ECO:0000255" key="2"/>
<evidence type="ECO:0000255" key="3">
    <source>
        <dbReference type="PROSITE-ProRule" id="PRU00338"/>
    </source>
</evidence>
<evidence type="ECO:0000256" key="4">
    <source>
        <dbReference type="SAM" id="MobiDB-lite"/>
    </source>
</evidence>
<evidence type="ECO:0000269" key="5">
    <source>
    </source>
</evidence>
<evidence type="ECO:0000269" key="6">
    <source>
    </source>
</evidence>
<evidence type="ECO:0000269" key="7">
    <source>
    </source>
</evidence>
<evidence type="ECO:0000269" key="8">
    <source>
    </source>
</evidence>
<evidence type="ECO:0000269" key="9">
    <source>
    </source>
</evidence>
<evidence type="ECO:0000269" key="10">
    <source>
    </source>
</evidence>
<evidence type="ECO:0000269" key="11">
    <source>
    </source>
</evidence>
<evidence type="ECO:0000269" key="12">
    <source>
    </source>
</evidence>
<evidence type="ECO:0000269" key="13">
    <source>
    </source>
</evidence>
<evidence type="ECO:0000269" key="14">
    <source>
    </source>
</evidence>
<evidence type="ECO:0000269" key="15">
    <source>
    </source>
</evidence>
<evidence type="ECO:0000269" key="16">
    <source>
    </source>
</evidence>
<evidence type="ECO:0000269" key="17">
    <source>
    </source>
</evidence>
<evidence type="ECO:0000269" key="18">
    <source>
    </source>
</evidence>
<evidence type="ECO:0000269" key="19">
    <source>
    </source>
</evidence>
<evidence type="ECO:0000269" key="20">
    <source>
    </source>
</evidence>
<evidence type="ECO:0000303" key="21">
    <source>
    </source>
</evidence>
<evidence type="ECO:0000305" key="22"/>
<evidence type="ECO:0007744" key="23">
    <source>
    </source>
</evidence>
<evidence type="ECO:0007744" key="24">
    <source>
    </source>
</evidence>
<evidence type="ECO:0007744" key="25">
    <source>
    </source>
</evidence>
<evidence type="ECO:0007744" key="26">
    <source>
    </source>
</evidence>
<evidence type="ECO:0007744" key="27">
    <source>
    </source>
</evidence>
<evidence type="ECO:0007744" key="28">
    <source>
    </source>
</evidence>
<evidence type="ECO:0007829" key="29">
    <source>
        <dbReference type="PDB" id="6CCG"/>
    </source>
</evidence>
<proteinExistence type="evidence at protein level"/>